<sequence>MPLLDSFKVDHTKMKAPGVRLAKVMQTPKGDNISVFDLRFCRPNHEIMSEKGTHTLEHLFAGFMREHLNSKDVEIIDISPMGCRTGFYMSLIGRPSETEVIKAFENSMKDVLKVTSQDDIPELNKFQCGSYKMHSLSEAKEIAQNVLNKGICIIKNDEIKLENF</sequence>
<feature type="chain" id="PRO_1000004840" description="S-ribosylhomocysteine lyase">
    <location>
        <begin position="1"/>
        <end position="164"/>
    </location>
</feature>
<feature type="binding site" evidence="1">
    <location>
        <position position="54"/>
    </location>
    <ligand>
        <name>Fe cation</name>
        <dbReference type="ChEBI" id="CHEBI:24875"/>
    </ligand>
</feature>
<feature type="binding site" evidence="1">
    <location>
        <position position="58"/>
    </location>
    <ligand>
        <name>Fe cation</name>
        <dbReference type="ChEBI" id="CHEBI:24875"/>
    </ligand>
</feature>
<feature type="binding site" evidence="1">
    <location>
        <position position="128"/>
    </location>
    <ligand>
        <name>Fe cation</name>
        <dbReference type="ChEBI" id="CHEBI:24875"/>
    </ligand>
</feature>
<gene>
    <name evidence="1" type="primary">luxS</name>
    <name type="ordered locus">CHAB381_0546</name>
</gene>
<comment type="function">
    <text evidence="1">Involved in the synthesis of autoinducer 2 (AI-2) which is secreted by bacteria and is used to communicate both the cell density and the metabolic potential of the environment. The regulation of gene expression in response to changes in cell density is called quorum sensing. Catalyzes the transformation of S-ribosylhomocysteine (RHC) to homocysteine (HC) and 4,5-dihydroxy-2,3-pentadione (DPD).</text>
</comment>
<comment type="catalytic activity">
    <reaction evidence="1">
        <text>S-(5-deoxy-D-ribos-5-yl)-L-homocysteine = (S)-4,5-dihydroxypentane-2,3-dione + L-homocysteine</text>
        <dbReference type="Rhea" id="RHEA:17753"/>
        <dbReference type="ChEBI" id="CHEBI:29484"/>
        <dbReference type="ChEBI" id="CHEBI:58195"/>
        <dbReference type="ChEBI" id="CHEBI:58199"/>
        <dbReference type="EC" id="4.4.1.21"/>
    </reaction>
</comment>
<comment type="cofactor">
    <cofactor evidence="1">
        <name>Fe cation</name>
        <dbReference type="ChEBI" id="CHEBI:24875"/>
    </cofactor>
    <text evidence="1">Binds 1 Fe cation per subunit.</text>
</comment>
<comment type="subunit">
    <text evidence="1">Homodimer.</text>
</comment>
<comment type="similarity">
    <text evidence="1">Belongs to the LuxS family.</text>
</comment>
<reference key="1">
    <citation type="submission" date="2007-07" db="EMBL/GenBank/DDBJ databases">
        <title>Complete genome sequence of Campylobacter hominis ATCC BAA-381, a commensal isolated from the human gastrointestinal tract.</title>
        <authorList>
            <person name="Fouts D.E."/>
            <person name="Mongodin E.F."/>
            <person name="Puiu D."/>
            <person name="Sebastian Y."/>
            <person name="Miller W.G."/>
            <person name="Mandrell R.E."/>
            <person name="Nelson K.E."/>
        </authorList>
    </citation>
    <scope>NUCLEOTIDE SEQUENCE [LARGE SCALE GENOMIC DNA]</scope>
    <source>
        <strain>ATCC BAA-381 / DSM 21671 / CCUG 45161 / LMG 19568 / NCTC 13146 / CH001A</strain>
    </source>
</reference>
<dbReference type="EC" id="4.4.1.21" evidence="1"/>
<dbReference type="EMBL" id="CP000776">
    <property type="protein sequence ID" value="ABS51373.1"/>
    <property type="molecule type" value="Genomic_DNA"/>
</dbReference>
<dbReference type="RefSeq" id="WP_012108421.1">
    <property type="nucleotide sequence ID" value="NC_009714.1"/>
</dbReference>
<dbReference type="SMR" id="A7I0U3"/>
<dbReference type="STRING" id="360107.CHAB381_0546"/>
<dbReference type="KEGG" id="cha:CHAB381_0546"/>
<dbReference type="eggNOG" id="COG1854">
    <property type="taxonomic scope" value="Bacteria"/>
</dbReference>
<dbReference type="HOGENOM" id="CLU_107531_2_0_7"/>
<dbReference type="OrthoDB" id="9788129at2"/>
<dbReference type="Proteomes" id="UP000002407">
    <property type="component" value="Chromosome"/>
</dbReference>
<dbReference type="GO" id="GO:0005506">
    <property type="term" value="F:iron ion binding"/>
    <property type="evidence" value="ECO:0007669"/>
    <property type="project" value="InterPro"/>
</dbReference>
<dbReference type="GO" id="GO:0043768">
    <property type="term" value="F:S-ribosylhomocysteine lyase activity"/>
    <property type="evidence" value="ECO:0007669"/>
    <property type="project" value="UniProtKB-UniRule"/>
</dbReference>
<dbReference type="GO" id="GO:0009372">
    <property type="term" value="P:quorum sensing"/>
    <property type="evidence" value="ECO:0007669"/>
    <property type="project" value="UniProtKB-UniRule"/>
</dbReference>
<dbReference type="Gene3D" id="3.30.1360.80">
    <property type="entry name" value="S-ribosylhomocysteinase (LuxS)"/>
    <property type="match status" value="1"/>
</dbReference>
<dbReference type="HAMAP" id="MF_00091">
    <property type="entry name" value="LuxS"/>
    <property type="match status" value="1"/>
</dbReference>
<dbReference type="InterPro" id="IPR037005">
    <property type="entry name" value="LuxS_sf"/>
</dbReference>
<dbReference type="InterPro" id="IPR011249">
    <property type="entry name" value="Metalloenz_LuxS/M16"/>
</dbReference>
<dbReference type="InterPro" id="IPR003815">
    <property type="entry name" value="S-ribosylhomocysteinase"/>
</dbReference>
<dbReference type="NCBIfam" id="NF002602">
    <property type="entry name" value="PRK02260.1-2"/>
    <property type="match status" value="1"/>
</dbReference>
<dbReference type="PANTHER" id="PTHR35799">
    <property type="entry name" value="S-RIBOSYLHOMOCYSTEINE LYASE"/>
    <property type="match status" value="1"/>
</dbReference>
<dbReference type="PANTHER" id="PTHR35799:SF1">
    <property type="entry name" value="S-RIBOSYLHOMOCYSTEINE LYASE"/>
    <property type="match status" value="1"/>
</dbReference>
<dbReference type="Pfam" id="PF02664">
    <property type="entry name" value="LuxS"/>
    <property type="match status" value="1"/>
</dbReference>
<dbReference type="PIRSF" id="PIRSF006160">
    <property type="entry name" value="AI2"/>
    <property type="match status" value="1"/>
</dbReference>
<dbReference type="PRINTS" id="PR01487">
    <property type="entry name" value="LUXSPROTEIN"/>
</dbReference>
<dbReference type="SUPFAM" id="SSF63411">
    <property type="entry name" value="LuxS/MPP-like metallohydrolase"/>
    <property type="match status" value="1"/>
</dbReference>
<proteinExistence type="inferred from homology"/>
<evidence type="ECO:0000255" key="1">
    <source>
        <dbReference type="HAMAP-Rule" id="MF_00091"/>
    </source>
</evidence>
<name>LUXS_CAMHC</name>
<protein>
    <recommendedName>
        <fullName evidence="1">S-ribosylhomocysteine lyase</fullName>
        <ecNumber evidence="1">4.4.1.21</ecNumber>
    </recommendedName>
    <alternativeName>
        <fullName evidence="1">AI-2 synthesis protein</fullName>
    </alternativeName>
    <alternativeName>
        <fullName evidence="1">Autoinducer-2 production protein LuxS</fullName>
    </alternativeName>
</protein>
<organism>
    <name type="scientific">Campylobacter hominis (strain ATCC BAA-381 / DSM 21671 / CCUG 45161 / LMG 19568 / NCTC 13146 / CH001A)</name>
    <dbReference type="NCBI Taxonomy" id="360107"/>
    <lineage>
        <taxon>Bacteria</taxon>
        <taxon>Pseudomonadati</taxon>
        <taxon>Campylobacterota</taxon>
        <taxon>Epsilonproteobacteria</taxon>
        <taxon>Campylobacterales</taxon>
        <taxon>Campylobacteraceae</taxon>
        <taxon>Campylobacter</taxon>
    </lineage>
</organism>
<accession>A7I0U3</accession>
<keyword id="KW-0071">Autoinducer synthesis</keyword>
<keyword id="KW-0408">Iron</keyword>
<keyword id="KW-0456">Lyase</keyword>
<keyword id="KW-0479">Metal-binding</keyword>
<keyword id="KW-0673">Quorum sensing</keyword>
<keyword id="KW-1185">Reference proteome</keyword>